<feature type="signal peptide" evidence="2">
    <location>
        <begin position="1"/>
        <end position="22"/>
    </location>
</feature>
<feature type="propeptide" id="PRO_0000446990" evidence="6">
    <location>
        <begin position="23"/>
        <end position="96"/>
    </location>
</feature>
<feature type="peptide" id="PRO_0000446991" description="Conotoxin flf14.2" evidence="6">
    <location>
        <begin position="96"/>
        <end position="122"/>
    </location>
</feature>
<feature type="region of interest" description="Disordered" evidence="3">
    <location>
        <begin position="53"/>
        <end position="91"/>
    </location>
</feature>
<feature type="compositionally biased region" description="Basic and acidic residues" evidence="3">
    <location>
        <begin position="62"/>
        <end position="85"/>
    </location>
</feature>
<feature type="disulfide bond" evidence="1">
    <location>
        <begin position="101"/>
        <end position="121"/>
    </location>
</feature>
<feature type="disulfide bond" evidence="1">
    <location>
        <begin position="105"/>
        <end position="117"/>
    </location>
</feature>
<reference key="1">
    <citation type="journal article" date="2018" name="Peptides">
        <title>Definition of the R-superfamily of conotoxins: structural convergence of helix-loop-helix peptidic scaffolds.</title>
        <authorList>
            <person name="Moeller C."/>
            <person name="Dovell S."/>
            <person name="Melaun C."/>
            <person name="Mari F."/>
        </authorList>
    </citation>
    <scope>NUCLEOTIDE SEQUENCE [MRNA]</scope>
    <source>
        <tissue>Venom duct</tissue>
    </source>
</reference>
<name>CRE2_CONAW</name>
<keyword id="KW-0165">Cleavage on pair of basic residues</keyword>
<keyword id="KW-1015">Disulfide bond</keyword>
<keyword id="KW-0964">Secreted</keyword>
<keyword id="KW-0732">Signal</keyword>
<keyword id="KW-0800">Toxin</keyword>
<evidence type="ECO:0000250" key="1">
    <source>
        <dbReference type="UniProtKB" id="P84707"/>
    </source>
</evidence>
<evidence type="ECO:0000255" key="2"/>
<evidence type="ECO:0000256" key="3">
    <source>
        <dbReference type="SAM" id="MobiDB-lite"/>
    </source>
</evidence>
<evidence type="ECO:0000303" key="4">
    <source>
    </source>
</evidence>
<evidence type="ECO:0000305" key="5"/>
<evidence type="ECO:0000305" key="6">
    <source>
    </source>
</evidence>
<organism>
    <name type="scientific">Conus anabathrum floridanus</name>
    <name type="common">Florida cone</name>
    <name type="synonym">Conus floridanus floridensis</name>
    <dbReference type="NCBI Taxonomy" id="1520082"/>
    <lineage>
        <taxon>Eukaryota</taxon>
        <taxon>Metazoa</taxon>
        <taxon>Spiralia</taxon>
        <taxon>Lophotrochozoa</taxon>
        <taxon>Mollusca</taxon>
        <taxon>Gastropoda</taxon>
        <taxon>Caenogastropoda</taxon>
        <taxon>Neogastropoda</taxon>
        <taxon>Conoidea</taxon>
        <taxon>Conidae</taxon>
        <taxon>Conus</taxon>
        <taxon>Dauciconus</taxon>
    </lineage>
</organism>
<proteinExistence type="evidence at transcript level"/>
<protein>
    <recommendedName>
        <fullName evidence="4">Conotoxin flf14.2</fullName>
    </recommendedName>
</protein>
<dbReference type="EMBL" id="MH750031">
    <property type="protein sequence ID" value="AYK27404.1"/>
    <property type="molecule type" value="mRNA"/>
</dbReference>
<dbReference type="SMR" id="A0A3G1VU73"/>
<dbReference type="ConoServer" id="8489">
    <property type="toxin name" value="FlfXIVB precursor"/>
</dbReference>
<dbReference type="GO" id="GO:0005576">
    <property type="term" value="C:extracellular region"/>
    <property type="evidence" value="ECO:0007669"/>
    <property type="project" value="UniProtKB-SubCell"/>
</dbReference>
<dbReference type="GO" id="GO:0090729">
    <property type="term" value="F:toxin activity"/>
    <property type="evidence" value="ECO:0007669"/>
    <property type="project" value="UniProtKB-KW"/>
</dbReference>
<sequence length="122" mass="14015">MGFRVLVLIVMVTTSALPFTFSEESGRSPFRPALRSEEAQALRHGLTLLLARRADGQPSDMRQPEMRRPEMRRPEVRRPEVRQPEFAESPVGQKRWDVNDCIHFCLIGVVGRSYTECHTMCT</sequence>
<accession>A0A3G1VU73</accession>
<comment type="subcellular location">
    <subcellularLocation>
        <location evidence="6">Secreted</location>
    </subcellularLocation>
</comment>
<comment type="tissue specificity">
    <text evidence="6">Expressed by the venom duct.</text>
</comment>
<comment type="domain">
    <text evidence="5">The cysteine framework is XIV (C-C-C-C).</text>
</comment>
<comment type="similarity">
    <text evidence="5">Belongs to the conotoxin R superfamily.</text>
</comment>